<reference key="1">
    <citation type="journal article" date="1986" name="Biochim. Biophys. Acta">
        <title>The amino acid sequence of ascidian (Halocynthia roretzi) myosin light chains.</title>
        <authorList>
            <person name="Takagi T."/>
            <person name="Kudoh S."/>
            <person name="Konishi K."/>
        </authorList>
    </citation>
    <scope>PROTEIN SEQUENCE</scope>
</reference>
<sequence>ATSNVFSMFDQSQIQEFKEAFTMIDANRDGFIDQEDLKDTYASLGRGIKDERIRDMLAESSGPVNFQIFLGLFGDKLSGTDPEETILEAFKILDADNKGVINKNYLAEIMMTQADRFSQSEVNQMFDISPIDVAGNLDYKSLCYIITHGQEEE</sequence>
<proteinExistence type="evidence at protein level"/>
<name>MLR_HALRO</name>
<feature type="chain" id="PRO_0000198748" description="Myosin regulatory light chain, smooth muscle">
    <location>
        <begin position="1"/>
        <end position="153"/>
    </location>
</feature>
<feature type="domain" description="EF-hand 1" evidence="1">
    <location>
        <begin position="12"/>
        <end position="47"/>
    </location>
</feature>
<feature type="domain" description="EF-hand 2" evidence="1">
    <location>
        <begin position="81"/>
        <end position="116"/>
    </location>
</feature>
<feature type="domain" description="EF-hand 3" evidence="1">
    <location>
        <begin position="117"/>
        <end position="152"/>
    </location>
</feature>
<feature type="binding site" evidence="1">
    <location>
        <position position="25"/>
    </location>
    <ligand>
        <name>Ca(2+)</name>
        <dbReference type="ChEBI" id="CHEBI:29108"/>
    </ligand>
</feature>
<feature type="binding site" evidence="1">
    <location>
        <position position="27"/>
    </location>
    <ligand>
        <name>Ca(2+)</name>
        <dbReference type="ChEBI" id="CHEBI:29108"/>
    </ligand>
</feature>
<feature type="binding site" evidence="1">
    <location>
        <position position="29"/>
    </location>
    <ligand>
        <name>Ca(2+)</name>
        <dbReference type="ChEBI" id="CHEBI:29108"/>
    </ligand>
</feature>
<feature type="binding site" evidence="1">
    <location>
        <position position="36"/>
    </location>
    <ligand>
        <name>Ca(2+)</name>
        <dbReference type="ChEBI" id="CHEBI:29108"/>
    </ligand>
</feature>
<protein>
    <recommendedName>
        <fullName>Myosin regulatory light chain, smooth muscle</fullName>
    </recommendedName>
</protein>
<keyword id="KW-0106">Calcium</keyword>
<keyword id="KW-0903">Direct protein sequencing</keyword>
<keyword id="KW-0479">Metal-binding</keyword>
<keyword id="KW-0505">Motor protein</keyword>
<keyword id="KW-0514">Muscle protein</keyword>
<keyword id="KW-0518">Myosin</keyword>
<keyword id="KW-0677">Repeat</keyword>
<dbReference type="PIR" id="A26092">
    <property type="entry name" value="A26092"/>
</dbReference>
<dbReference type="SMR" id="P07461"/>
<dbReference type="GO" id="GO:0016459">
    <property type="term" value="C:myosin complex"/>
    <property type="evidence" value="ECO:0007669"/>
    <property type="project" value="UniProtKB-KW"/>
</dbReference>
<dbReference type="GO" id="GO:0005509">
    <property type="term" value="F:calcium ion binding"/>
    <property type="evidence" value="ECO:0007669"/>
    <property type="project" value="InterPro"/>
</dbReference>
<dbReference type="FunFam" id="1.10.238.10:FF:000010">
    <property type="entry name" value="Myosin regulatory light chain 2, atrial isoform"/>
    <property type="match status" value="1"/>
</dbReference>
<dbReference type="FunFam" id="1.10.238.10:FF:000007">
    <property type="entry name" value="Putative myosin regulatory light chain sqh"/>
    <property type="match status" value="1"/>
</dbReference>
<dbReference type="Gene3D" id="1.10.238.10">
    <property type="entry name" value="EF-hand"/>
    <property type="match status" value="2"/>
</dbReference>
<dbReference type="InterPro" id="IPR011992">
    <property type="entry name" value="EF-hand-dom_pair"/>
</dbReference>
<dbReference type="InterPro" id="IPR018247">
    <property type="entry name" value="EF_Hand_1_Ca_BS"/>
</dbReference>
<dbReference type="InterPro" id="IPR002048">
    <property type="entry name" value="EF_hand_dom"/>
</dbReference>
<dbReference type="InterPro" id="IPR050403">
    <property type="entry name" value="Myosin_RLC"/>
</dbReference>
<dbReference type="PANTHER" id="PTHR23049">
    <property type="entry name" value="MYOSIN REGULATORY LIGHT CHAIN 2"/>
    <property type="match status" value="1"/>
</dbReference>
<dbReference type="Pfam" id="PF13499">
    <property type="entry name" value="EF-hand_7"/>
    <property type="match status" value="1"/>
</dbReference>
<dbReference type="SMART" id="SM00054">
    <property type="entry name" value="EFh"/>
    <property type="match status" value="2"/>
</dbReference>
<dbReference type="SUPFAM" id="SSF47473">
    <property type="entry name" value="EF-hand"/>
    <property type="match status" value="1"/>
</dbReference>
<dbReference type="PROSITE" id="PS00018">
    <property type="entry name" value="EF_HAND_1"/>
    <property type="match status" value="1"/>
</dbReference>
<dbReference type="PROSITE" id="PS50222">
    <property type="entry name" value="EF_HAND_2"/>
    <property type="match status" value="3"/>
</dbReference>
<accession>P07461</accession>
<comment type="function">
    <text>In molluscan muscle, calcium regulation is associated with myosin rather than with actin. Muscle myosin contains two types of light chains: the catalytic light chain, essential for ATPase activity, and the regulatory light chain, a calcium-binding protein responsible for Ca(2+) dependent binding and Ca(2+) dependent Mg-ATPase activity.</text>
</comment>
<comment type="miscellaneous">
    <text>This chain binds calcium.</text>
</comment>
<organism>
    <name type="scientific">Halocynthia roretzi</name>
    <name type="common">Sea squirt</name>
    <name type="synonym">Cynthia roretzi</name>
    <dbReference type="NCBI Taxonomy" id="7729"/>
    <lineage>
        <taxon>Eukaryota</taxon>
        <taxon>Metazoa</taxon>
        <taxon>Chordata</taxon>
        <taxon>Tunicata</taxon>
        <taxon>Ascidiacea</taxon>
        <taxon>Stolidobranchia</taxon>
        <taxon>Pyuridae</taxon>
        <taxon>Halocynthia</taxon>
    </lineage>
</organism>
<evidence type="ECO:0000255" key="1">
    <source>
        <dbReference type="PROSITE-ProRule" id="PRU00448"/>
    </source>
</evidence>